<sequence length="704" mass="75434">MAKITKTFQYGKHTVTLETGEIARQAGGAVIVKVDDTVLLVTAVAAKSAREGQDFFPLTVDYQEKFYAGGRIPGGFFKREGRATEKETLISRLIDRPIRPLFPEDYKNEVQIIATVMSMNPDIDGDIAALIGASAALSLAGTPFKGPIGAAKVGYKNGEYILNPTVTELKDSQLELVVAGTANAVLMVESEAELLSEEVMLGAVTFGHREMQKVINVINELTVEAGTKPSDWVAPAKNDGMIAALKEAVGDQLASAFQVRDKLQRRDAISAIKKDVLGALAPRATIEGWAAGDLAKEFGELEYQTMRGSVLSTKVRIDGRALDTVRPISATAGVLPRTHGSALFTRGETQAIVITTLGTARDGQVIDAVSGEYKENFLFHYNFPPYSVGECGRFGAPKRREIGHGRLAKRGVLAVMPTLEEFPYTIRVVSEITESNGSSSMASVCGSSLALMDAGVPIKAPVAGIAMGLVKEGNDFVVLSDILGDEDHLGDMDFKVAGTAEGVSALQMDIKIEGITEEIMKQALQQAKAGRLHILGEMAHALTTPRQELSDYAPRLLTIKIHPDKIREVIGKGGSTIQAITKETGTQIDIQDDGTIIIASVNAIAAQAAKSRIEQITSDVEPGRIYEGKVAKIMDFGAFVTILPGKDGLVHVSQISSERVEKVGDKLKEGDLVRVKVLEVDKQGRIRLSIKAVEEGEGVQASAE</sequence>
<comment type="function">
    <text evidence="1">Involved in mRNA degradation. Catalyzes the phosphorolysis of single-stranded polyribonucleotides processively in the 3'- to 5'-direction.</text>
</comment>
<comment type="catalytic activity">
    <reaction evidence="1">
        <text>RNA(n+1) + phosphate = RNA(n) + a ribonucleoside 5'-diphosphate</text>
        <dbReference type="Rhea" id="RHEA:22096"/>
        <dbReference type="Rhea" id="RHEA-COMP:14527"/>
        <dbReference type="Rhea" id="RHEA-COMP:17342"/>
        <dbReference type="ChEBI" id="CHEBI:43474"/>
        <dbReference type="ChEBI" id="CHEBI:57930"/>
        <dbReference type="ChEBI" id="CHEBI:140395"/>
        <dbReference type="EC" id="2.7.7.8"/>
    </reaction>
</comment>
<comment type="cofactor">
    <cofactor evidence="1">
        <name>Mg(2+)</name>
        <dbReference type="ChEBI" id="CHEBI:18420"/>
    </cofactor>
</comment>
<comment type="subunit">
    <text evidence="1">Component of the RNA degradosome, which is a multiprotein complex involved in RNA processing and mRNA degradation.</text>
</comment>
<comment type="subcellular location">
    <subcellularLocation>
        <location evidence="1">Cytoplasm</location>
    </subcellularLocation>
</comment>
<comment type="similarity">
    <text evidence="1">Belongs to the polyribonucleotide nucleotidyltransferase family.</text>
</comment>
<accession>Q8PJ59</accession>
<protein>
    <recommendedName>
        <fullName evidence="1">Polyribonucleotide nucleotidyltransferase</fullName>
        <ecNumber evidence="1">2.7.7.8</ecNumber>
    </recommendedName>
    <alternativeName>
        <fullName evidence="1">Polynucleotide phosphorylase</fullName>
        <shortName evidence="1">PNPase</shortName>
    </alternativeName>
</protein>
<proteinExistence type="inferred from homology"/>
<evidence type="ECO:0000255" key="1">
    <source>
        <dbReference type="HAMAP-Rule" id="MF_01595"/>
    </source>
</evidence>
<keyword id="KW-0963">Cytoplasm</keyword>
<keyword id="KW-0460">Magnesium</keyword>
<keyword id="KW-0479">Metal-binding</keyword>
<keyword id="KW-0548">Nucleotidyltransferase</keyword>
<keyword id="KW-0694">RNA-binding</keyword>
<keyword id="KW-0808">Transferase</keyword>
<reference key="1">
    <citation type="journal article" date="2002" name="Nature">
        <title>Comparison of the genomes of two Xanthomonas pathogens with differing host specificities.</title>
        <authorList>
            <person name="da Silva A.C.R."/>
            <person name="Ferro J.A."/>
            <person name="Reinach F.C."/>
            <person name="Farah C.S."/>
            <person name="Furlan L.R."/>
            <person name="Quaggio R.B."/>
            <person name="Monteiro-Vitorello C.B."/>
            <person name="Van Sluys M.A."/>
            <person name="Almeida N.F. Jr."/>
            <person name="Alves L.M.C."/>
            <person name="do Amaral A.M."/>
            <person name="Bertolini M.C."/>
            <person name="Camargo L.E.A."/>
            <person name="Camarotte G."/>
            <person name="Cannavan F."/>
            <person name="Cardozo J."/>
            <person name="Chambergo F."/>
            <person name="Ciapina L.P."/>
            <person name="Cicarelli R.M.B."/>
            <person name="Coutinho L.L."/>
            <person name="Cursino-Santos J.R."/>
            <person name="El-Dorry H."/>
            <person name="Faria J.B."/>
            <person name="Ferreira A.J.S."/>
            <person name="Ferreira R.C.C."/>
            <person name="Ferro M.I.T."/>
            <person name="Formighieri E.F."/>
            <person name="Franco M.C."/>
            <person name="Greggio C.C."/>
            <person name="Gruber A."/>
            <person name="Katsuyama A.M."/>
            <person name="Kishi L.T."/>
            <person name="Leite R.P."/>
            <person name="Lemos E.G.M."/>
            <person name="Lemos M.V.F."/>
            <person name="Locali E.C."/>
            <person name="Machado M.A."/>
            <person name="Madeira A.M.B.N."/>
            <person name="Martinez-Rossi N.M."/>
            <person name="Martins E.C."/>
            <person name="Meidanis J."/>
            <person name="Menck C.F.M."/>
            <person name="Miyaki C.Y."/>
            <person name="Moon D.H."/>
            <person name="Moreira L.M."/>
            <person name="Novo M.T.M."/>
            <person name="Okura V.K."/>
            <person name="Oliveira M.C."/>
            <person name="Oliveira V.R."/>
            <person name="Pereira H.A."/>
            <person name="Rossi A."/>
            <person name="Sena J.A.D."/>
            <person name="Silva C."/>
            <person name="de Souza R.F."/>
            <person name="Spinola L.A.F."/>
            <person name="Takita M.A."/>
            <person name="Tamura R.E."/>
            <person name="Teixeira E.C."/>
            <person name="Tezza R.I.D."/>
            <person name="Trindade dos Santos M."/>
            <person name="Truffi D."/>
            <person name="Tsai S.M."/>
            <person name="White F.F."/>
            <person name="Setubal J.C."/>
            <person name="Kitajima J.P."/>
        </authorList>
    </citation>
    <scope>NUCLEOTIDE SEQUENCE [LARGE SCALE GENOMIC DNA]</scope>
    <source>
        <strain>306</strain>
    </source>
</reference>
<gene>
    <name evidence="1" type="primary">pnp</name>
    <name type="ordered locus">XAC2683</name>
</gene>
<dbReference type="EC" id="2.7.7.8" evidence="1"/>
<dbReference type="EMBL" id="AE008923">
    <property type="protein sequence ID" value="AAM37530.1"/>
    <property type="molecule type" value="Genomic_DNA"/>
</dbReference>
<dbReference type="RefSeq" id="WP_005920229.1">
    <property type="nucleotide sequence ID" value="NC_003919.1"/>
</dbReference>
<dbReference type="SMR" id="Q8PJ59"/>
<dbReference type="GeneID" id="66911772"/>
<dbReference type="KEGG" id="xac:XAC2683"/>
<dbReference type="eggNOG" id="COG1185">
    <property type="taxonomic scope" value="Bacteria"/>
</dbReference>
<dbReference type="HOGENOM" id="CLU_004217_2_2_6"/>
<dbReference type="Proteomes" id="UP000000576">
    <property type="component" value="Chromosome"/>
</dbReference>
<dbReference type="GO" id="GO:0005829">
    <property type="term" value="C:cytosol"/>
    <property type="evidence" value="ECO:0007669"/>
    <property type="project" value="TreeGrafter"/>
</dbReference>
<dbReference type="GO" id="GO:0000175">
    <property type="term" value="F:3'-5'-RNA exonuclease activity"/>
    <property type="evidence" value="ECO:0007669"/>
    <property type="project" value="TreeGrafter"/>
</dbReference>
<dbReference type="GO" id="GO:0000287">
    <property type="term" value="F:magnesium ion binding"/>
    <property type="evidence" value="ECO:0007669"/>
    <property type="project" value="UniProtKB-UniRule"/>
</dbReference>
<dbReference type="GO" id="GO:0004654">
    <property type="term" value="F:polyribonucleotide nucleotidyltransferase activity"/>
    <property type="evidence" value="ECO:0007669"/>
    <property type="project" value="UniProtKB-UniRule"/>
</dbReference>
<dbReference type="GO" id="GO:0003723">
    <property type="term" value="F:RNA binding"/>
    <property type="evidence" value="ECO:0007669"/>
    <property type="project" value="UniProtKB-UniRule"/>
</dbReference>
<dbReference type="GO" id="GO:0006402">
    <property type="term" value="P:mRNA catabolic process"/>
    <property type="evidence" value="ECO:0007669"/>
    <property type="project" value="UniProtKB-UniRule"/>
</dbReference>
<dbReference type="GO" id="GO:0006396">
    <property type="term" value="P:RNA processing"/>
    <property type="evidence" value="ECO:0007669"/>
    <property type="project" value="InterPro"/>
</dbReference>
<dbReference type="CDD" id="cd02393">
    <property type="entry name" value="KH-I_PNPase"/>
    <property type="match status" value="1"/>
</dbReference>
<dbReference type="CDD" id="cd11363">
    <property type="entry name" value="RNase_PH_PNPase_1"/>
    <property type="match status" value="1"/>
</dbReference>
<dbReference type="CDD" id="cd11364">
    <property type="entry name" value="RNase_PH_PNPase_2"/>
    <property type="match status" value="1"/>
</dbReference>
<dbReference type="CDD" id="cd04472">
    <property type="entry name" value="S1_PNPase"/>
    <property type="match status" value="1"/>
</dbReference>
<dbReference type="FunFam" id="2.40.50.140:FF:000023">
    <property type="entry name" value="Polyribonucleotide nucleotidyltransferase"/>
    <property type="match status" value="1"/>
</dbReference>
<dbReference type="FunFam" id="3.30.1370.10:FF:000001">
    <property type="entry name" value="Polyribonucleotide nucleotidyltransferase"/>
    <property type="match status" value="1"/>
</dbReference>
<dbReference type="FunFam" id="3.30.230.70:FF:000001">
    <property type="entry name" value="Polyribonucleotide nucleotidyltransferase"/>
    <property type="match status" value="1"/>
</dbReference>
<dbReference type="FunFam" id="3.30.230.70:FF:000002">
    <property type="entry name" value="Polyribonucleotide nucleotidyltransferase"/>
    <property type="match status" value="1"/>
</dbReference>
<dbReference type="Gene3D" id="3.30.230.70">
    <property type="entry name" value="GHMP Kinase, N-terminal domain"/>
    <property type="match status" value="2"/>
</dbReference>
<dbReference type="Gene3D" id="3.30.1370.10">
    <property type="entry name" value="K Homology domain, type 1"/>
    <property type="match status" value="1"/>
</dbReference>
<dbReference type="Gene3D" id="2.40.50.140">
    <property type="entry name" value="Nucleic acid-binding proteins"/>
    <property type="match status" value="1"/>
</dbReference>
<dbReference type="HAMAP" id="MF_01595">
    <property type="entry name" value="PNPase"/>
    <property type="match status" value="1"/>
</dbReference>
<dbReference type="InterPro" id="IPR001247">
    <property type="entry name" value="ExoRNase_PH_dom1"/>
</dbReference>
<dbReference type="InterPro" id="IPR015847">
    <property type="entry name" value="ExoRNase_PH_dom2"/>
</dbReference>
<dbReference type="InterPro" id="IPR036345">
    <property type="entry name" value="ExoRNase_PH_dom2_sf"/>
</dbReference>
<dbReference type="InterPro" id="IPR004087">
    <property type="entry name" value="KH_dom"/>
</dbReference>
<dbReference type="InterPro" id="IPR004088">
    <property type="entry name" value="KH_dom_type_1"/>
</dbReference>
<dbReference type="InterPro" id="IPR036612">
    <property type="entry name" value="KH_dom_type_1_sf"/>
</dbReference>
<dbReference type="InterPro" id="IPR012340">
    <property type="entry name" value="NA-bd_OB-fold"/>
</dbReference>
<dbReference type="InterPro" id="IPR012162">
    <property type="entry name" value="PNPase"/>
</dbReference>
<dbReference type="InterPro" id="IPR027408">
    <property type="entry name" value="PNPase/RNase_PH_dom_sf"/>
</dbReference>
<dbReference type="InterPro" id="IPR015848">
    <property type="entry name" value="PNPase_PH_RNA-bd_bac/org-type"/>
</dbReference>
<dbReference type="InterPro" id="IPR036456">
    <property type="entry name" value="PNPase_PH_RNA-bd_sf"/>
</dbReference>
<dbReference type="InterPro" id="IPR020568">
    <property type="entry name" value="Ribosomal_Su5_D2-typ_SF"/>
</dbReference>
<dbReference type="InterPro" id="IPR003029">
    <property type="entry name" value="S1_domain"/>
</dbReference>
<dbReference type="NCBIfam" id="TIGR03591">
    <property type="entry name" value="polynuc_phos"/>
    <property type="match status" value="1"/>
</dbReference>
<dbReference type="NCBIfam" id="NF008805">
    <property type="entry name" value="PRK11824.1"/>
    <property type="match status" value="1"/>
</dbReference>
<dbReference type="PANTHER" id="PTHR11252">
    <property type="entry name" value="POLYRIBONUCLEOTIDE NUCLEOTIDYLTRANSFERASE"/>
    <property type="match status" value="1"/>
</dbReference>
<dbReference type="PANTHER" id="PTHR11252:SF0">
    <property type="entry name" value="POLYRIBONUCLEOTIDE NUCLEOTIDYLTRANSFERASE 1, MITOCHONDRIAL"/>
    <property type="match status" value="1"/>
</dbReference>
<dbReference type="Pfam" id="PF00013">
    <property type="entry name" value="KH_1"/>
    <property type="match status" value="1"/>
</dbReference>
<dbReference type="Pfam" id="PF03726">
    <property type="entry name" value="PNPase"/>
    <property type="match status" value="1"/>
</dbReference>
<dbReference type="Pfam" id="PF01138">
    <property type="entry name" value="RNase_PH"/>
    <property type="match status" value="2"/>
</dbReference>
<dbReference type="Pfam" id="PF03725">
    <property type="entry name" value="RNase_PH_C"/>
    <property type="match status" value="2"/>
</dbReference>
<dbReference type="Pfam" id="PF00575">
    <property type="entry name" value="S1"/>
    <property type="match status" value="1"/>
</dbReference>
<dbReference type="PIRSF" id="PIRSF005499">
    <property type="entry name" value="PNPase"/>
    <property type="match status" value="1"/>
</dbReference>
<dbReference type="SMART" id="SM00322">
    <property type="entry name" value="KH"/>
    <property type="match status" value="1"/>
</dbReference>
<dbReference type="SMART" id="SM00316">
    <property type="entry name" value="S1"/>
    <property type="match status" value="1"/>
</dbReference>
<dbReference type="SUPFAM" id="SSF54791">
    <property type="entry name" value="Eukaryotic type KH-domain (KH-domain type I)"/>
    <property type="match status" value="1"/>
</dbReference>
<dbReference type="SUPFAM" id="SSF50249">
    <property type="entry name" value="Nucleic acid-binding proteins"/>
    <property type="match status" value="1"/>
</dbReference>
<dbReference type="SUPFAM" id="SSF46915">
    <property type="entry name" value="Polynucleotide phosphorylase/guanosine pentaphosphate synthase (PNPase/GPSI), domain 3"/>
    <property type="match status" value="1"/>
</dbReference>
<dbReference type="SUPFAM" id="SSF55666">
    <property type="entry name" value="Ribonuclease PH domain 2-like"/>
    <property type="match status" value="2"/>
</dbReference>
<dbReference type="SUPFAM" id="SSF54211">
    <property type="entry name" value="Ribosomal protein S5 domain 2-like"/>
    <property type="match status" value="2"/>
</dbReference>
<dbReference type="PROSITE" id="PS50084">
    <property type="entry name" value="KH_TYPE_1"/>
    <property type="match status" value="1"/>
</dbReference>
<dbReference type="PROSITE" id="PS50126">
    <property type="entry name" value="S1"/>
    <property type="match status" value="1"/>
</dbReference>
<feature type="chain" id="PRO_0000329938" description="Polyribonucleotide nucleotidyltransferase">
    <location>
        <begin position="1"/>
        <end position="704"/>
    </location>
</feature>
<feature type="domain" description="KH" evidence="1">
    <location>
        <begin position="554"/>
        <end position="613"/>
    </location>
</feature>
<feature type="domain" description="S1 motif" evidence="1">
    <location>
        <begin position="623"/>
        <end position="691"/>
    </location>
</feature>
<feature type="binding site" evidence="1">
    <location>
        <position position="487"/>
    </location>
    <ligand>
        <name>Mg(2+)</name>
        <dbReference type="ChEBI" id="CHEBI:18420"/>
    </ligand>
</feature>
<feature type="binding site" evidence="1">
    <location>
        <position position="493"/>
    </location>
    <ligand>
        <name>Mg(2+)</name>
        <dbReference type="ChEBI" id="CHEBI:18420"/>
    </ligand>
</feature>
<name>PNP_XANAC</name>
<organism>
    <name type="scientific">Xanthomonas axonopodis pv. citri (strain 306)</name>
    <dbReference type="NCBI Taxonomy" id="190486"/>
    <lineage>
        <taxon>Bacteria</taxon>
        <taxon>Pseudomonadati</taxon>
        <taxon>Pseudomonadota</taxon>
        <taxon>Gammaproteobacteria</taxon>
        <taxon>Lysobacterales</taxon>
        <taxon>Lysobacteraceae</taxon>
        <taxon>Xanthomonas</taxon>
    </lineage>
</organism>